<evidence type="ECO:0000255" key="1">
    <source>
        <dbReference type="HAMAP-Rule" id="MF_00336"/>
    </source>
</evidence>
<dbReference type="EC" id="6.3.3.3" evidence="1"/>
<dbReference type="EMBL" id="AL646052">
    <property type="protein sequence ID" value="CAD15181.1"/>
    <property type="molecule type" value="Genomic_DNA"/>
</dbReference>
<dbReference type="RefSeq" id="WP_011001428.1">
    <property type="nucleotide sequence ID" value="NC_003295.1"/>
</dbReference>
<dbReference type="SMR" id="Q8XZC2"/>
<dbReference type="STRING" id="267608.RSc1479"/>
<dbReference type="EnsemblBacteria" id="CAD15181">
    <property type="protein sequence ID" value="CAD15181"/>
    <property type="gene ID" value="RSc1479"/>
</dbReference>
<dbReference type="KEGG" id="rso:RSc1479"/>
<dbReference type="eggNOG" id="COG0132">
    <property type="taxonomic scope" value="Bacteria"/>
</dbReference>
<dbReference type="HOGENOM" id="CLU_072551_0_0_4"/>
<dbReference type="UniPathway" id="UPA00078">
    <property type="reaction ID" value="UER00161"/>
</dbReference>
<dbReference type="Proteomes" id="UP000001436">
    <property type="component" value="Chromosome"/>
</dbReference>
<dbReference type="GO" id="GO:0005829">
    <property type="term" value="C:cytosol"/>
    <property type="evidence" value="ECO:0007669"/>
    <property type="project" value="TreeGrafter"/>
</dbReference>
<dbReference type="GO" id="GO:0005524">
    <property type="term" value="F:ATP binding"/>
    <property type="evidence" value="ECO:0007669"/>
    <property type="project" value="UniProtKB-UniRule"/>
</dbReference>
<dbReference type="GO" id="GO:0004141">
    <property type="term" value="F:dethiobiotin synthase activity"/>
    <property type="evidence" value="ECO:0007669"/>
    <property type="project" value="UniProtKB-UniRule"/>
</dbReference>
<dbReference type="GO" id="GO:0000287">
    <property type="term" value="F:magnesium ion binding"/>
    <property type="evidence" value="ECO:0007669"/>
    <property type="project" value="UniProtKB-UniRule"/>
</dbReference>
<dbReference type="GO" id="GO:0009102">
    <property type="term" value="P:biotin biosynthetic process"/>
    <property type="evidence" value="ECO:0007669"/>
    <property type="project" value="UniProtKB-UniRule"/>
</dbReference>
<dbReference type="CDD" id="cd03109">
    <property type="entry name" value="DTBS"/>
    <property type="match status" value="1"/>
</dbReference>
<dbReference type="FunFam" id="3.40.50.300:FF:000292">
    <property type="entry name" value="ATP-dependent dethiobiotin synthetase BioD"/>
    <property type="match status" value="1"/>
</dbReference>
<dbReference type="Gene3D" id="3.40.50.300">
    <property type="entry name" value="P-loop containing nucleotide triphosphate hydrolases"/>
    <property type="match status" value="1"/>
</dbReference>
<dbReference type="HAMAP" id="MF_00336">
    <property type="entry name" value="BioD"/>
    <property type="match status" value="1"/>
</dbReference>
<dbReference type="InterPro" id="IPR004472">
    <property type="entry name" value="DTB_synth_BioD"/>
</dbReference>
<dbReference type="InterPro" id="IPR027417">
    <property type="entry name" value="P-loop_NTPase"/>
</dbReference>
<dbReference type="NCBIfam" id="TIGR00347">
    <property type="entry name" value="bioD"/>
    <property type="match status" value="1"/>
</dbReference>
<dbReference type="PANTHER" id="PTHR43210">
    <property type="entry name" value="DETHIOBIOTIN SYNTHETASE"/>
    <property type="match status" value="1"/>
</dbReference>
<dbReference type="PANTHER" id="PTHR43210:SF5">
    <property type="entry name" value="DETHIOBIOTIN SYNTHETASE"/>
    <property type="match status" value="1"/>
</dbReference>
<dbReference type="Pfam" id="PF13500">
    <property type="entry name" value="AAA_26"/>
    <property type="match status" value="1"/>
</dbReference>
<dbReference type="PIRSF" id="PIRSF006755">
    <property type="entry name" value="DTB_synth"/>
    <property type="match status" value="1"/>
</dbReference>
<dbReference type="SUPFAM" id="SSF52540">
    <property type="entry name" value="P-loop containing nucleoside triphosphate hydrolases"/>
    <property type="match status" value="1"/>
</dbReference>
<protein>
    <recommendedName>
        <fullName evidence="1">ATP-dependent dethiobiotin synthetase BioD</fullName>
        <ecNumber evidence="1">6.3.3.3</ecNumber>
    </recommendedName>
    <alternativeName>
        <fullName evidence="1">DTB synthetase</fullName>
        <shortName evidence="1">DTBS</shortName>
    </alternativeName>
    <alternativeName>
        <fullName evidence="1">Dethiobiotin synthase</fullName>
    </alternativeName>
</protein>
<gene>
    <name evidence="1" type="primary">bioD</name>
    <name type="ordered locus">RSc1479</name>
    <name type="ORF">RS03828</name>
</gene>
<name>BIOD_RALN1</name>
<organism>
    <name type="scientific">Ralstonia nicotianae (strain ATCC BAA-1114 / GMI1000)</name>
    <name type="common">Ralstonia solanacearum</name>
    <dbReference type="NCBI Taxonomy" id="267608"/>
    <lineage>
        <taxon>Bacteria</taxon>
        <taxon>Pseudomonadati</taxon>
        <taxon>Pseudomonadota</taxon>
        <taxon>Betaproteobacteria</taxon>
        <taxon>Burkholderiales</taxon>
        <taxon>Burkholderiaceae</taxon>
        <taxon>Ralstonia</taxon>
        <taxon>Ralstonia solanacearum species complex</taxon>
    </lineage>
</organism>
<proteinExistence type="inferred from homology"/>
<accession>Q8XZC2</accession>
<comment type="function">
    <text evidence="1">Catalyzes a mechanistically unusual reaction, the ATP-dependent insertion of CO2 between the N7 and N8 nitrogen atoms of 7,8-diaminopelargonic acid (DAPA, also called 7,8-diammoniononanoate) to form a ureido ring.</text>
</comment>
<comment type="catalytic activity">
    <reaction evidence="1">
        <text>(7R,8S)-7,8-diammoniononanoate + CO2 + ATP = (4R,5S)-dethiobiotin + ADP + phosphate + 3 H(+)</text>
        <dbReference type="Rhea" id="RHEA:15805"/>
        <dbReference type="ChEBI" id="CHEBI:15378"/>
        <dbReference type="ChEBI" id="CHEBI:16526"/>
        <dbReference type="ChEBI" id="CHEBI:30616"/>
        <dbReference type="ChEBI" id="CHEBI:43474"/>
        <dbReference type="ChEBI" id="CHEBI:149469"/>
        <dbReference type="ChEBI" id="CHEBI:149473"/>
        <dbReference type="ChEBI" id="CHEBI:456216"/>
        <dbReference type="EC" id="6.3.3.3"/>
    </reaction>
</comment>
<comment type="cofactor">
    <cofactor evidence="1">
        <name>Mg(2+)</name>
        <dbReference type="ChEBI" id="CHEBI:18420"/>
    </cofactor>
</comment>
<comment type="pathway">
    <text evidence="1">Cofactor biosynthesis; biotin biosynthesis; biotin from 7,8-diaminononanoate: step 1/2.</text>
</comment>
<comment type="subunit">
    <text evidence="1">Homodimer.</text>
</comment>
<comment type="subcellular location">
    <subcellularLocation>
        <location evidence="1">Cytoplasm</location>
    </subcellularLocation>
</comment>
<comment type="similarity">
    <text evidence="1">Belongs to the dethiobiotin synthetase family.</text>
</comment>
<sequence length="229" mass="23620">MPVRFDCFVTGTDTEIGKTLASAALLTALAGAGYRTAGLKPVAAGTLAGAPERTNEDIEQLRAAATVGLPMATLCPWLLDAPMSPHLAARRAGVTITLPPIVDALAQARTQADAVVVEGVGGFRVPLSDTFDTAQLAVALGLPVVLVVGLRLGCLNHAALTAEAIAARGLRLAGWIGNVVDATMAGLDDNVATLRRWIDAPHLGTIPRLPRPDARLAASHVDIAPLLAR</sequence>
<keyword id="KW-0067">ATP-binding</keyword>
<keyword id="KW-0093">Biotin biosynthesis</keyword>
<keyword id="KW-0963">Cytoplasm</keyword>
<keyword id="KW-0436">Ligase</keyword>
<keyword id="KW-0460">Magnesium</keyword>
<keyword id="KW-0479">Metal-binding</keyword>
<keyword id="KW-0547">Nucleotide-binding</keyword>
<keyword id="KW-1185">Reference proteome</keyword>
<feature type="chain" id="PRO_0000187983" description="ATP-dependent dethiobiotin synthetase BioD">
    <location>
        <begin position="1"/>
        <end position="229"/>
    </location>
</feature>
<feature type="active site" evidence="1">
    <location>
        <position position="40"/>
    </location>
</feature>
<feature type="binding site" evidence="1">
    <location>
        <begin position="15"/>
        <end position="20"/>
    </location>
    <ligand>
        <name>ATP</name>
        <dbReference type="ChEBI" id="CHEBI:30616"/>
    </ligand>
</feature>
<feature type="binding site" evidence="1">
    <location>
        <position position="19"/>
    </location>
    <ligand>
        <name>Mg(2+)</name>
        <dbReference type="ChEBI" id="CHEBI:18420"/>
    </ligand>
</feature>
<feature type="binding site" evidence="1">
    <location>
        <position position="57"/>
    </location>
    <ligand>
        <name>ATP</name>
        <dbReference type="ChEBI" id="CHEBI:30616"/>
    </ligand>
</feature>
<feature type="binding site" evidence="1">
    <location>
        <position position="57"/>
    </location>
    <ligand>
        <name>Mg(2+)</name>
        <dbReference type="ChEBI" id="CHEBI:18420"/>
    </ligand>
</feature>
<feature type="binding site" evidence="1">
    <location>
        <begin position="118"/>
        <end position="121"/>
    </location>
    <ligand>
        <name>ATP</name>
        <dbReference type="ChEBI" id="CHEBI:30616"/>
    </ligand>
</feature>
<feature type="binding site" evidence="1">
    <location>
        <position position="118"/>
    </location>
    <ligand>
        <name>Mg(2+)</name>
        <dbReference type="ChEBI" id="CHEBI:18420"/>
    </ligand>
</feature>
<feature type="binding site" evidence="1">
    <location>
        <begin position="207"/>
        <end position="209"/>
    </location>
    <ligand>
        <name>ATP</name>
        <dbReference type="ChEBI" id="CHEBI:30616"/>
    </ligand>
</feature>
<reference key="1">
    <citation type="journal article" date="2002" name="Nature">
        <title>Genome sequence of the plant pathogen Ralstonia solanacearum.</title>
        <authorList>
            <person name="Salanoubat M."/>
            <person name="Genin S."/>
            <person name="Artiguenave F."/>
            <person name="Gouzy J."/>
            <person name="Mangenot S."/>
            <person name="Arlat M."/>
            <person name="Billault A."/>
            <person name="Brottier P."/>
            <person name="Camus J.-C."/>
            <person name="Cattolico L."/>
            <person name="Chandler M."/>
            <person name="Choisne N."/>
            <person name="Claudel-Renard C."/>
            <person name="Cunnac S."/>
            <person name="Demange N."/>
            <person name="Gaspin C."/>
            <person name="Lavie M."/>
            <person name="Moisan A."/>
            <person name="Robert C."/>
            <person name="Saurin W."/>
            <person name="Schiex T."/>
            <person name="Siguier P."/>
            <person name="Thebault P."/>
            <person name="Whalen M."/>
            <person name="Wincker P."/>
            <person name="Levy M."/>
            <person name="Weissenbach J."/>
            <person name="Boucher C.A."/>
        </authorList>
    </citation>
    <scope>NUCLEOTIDE SEQUENCE [LARGE SCALE GENOMIC DNA]</scope>
    <source>
        <strain>ATCC BAA-1114 / GMI1000</strain>
    </source>
</reference>